<accession>P55350</accession>
<feature type="chain" id="PRO_0000067442" description="Presqualene diphosphate synthase">
    <location>
        <begin position="1"/>
        <end position="279"/>
    </location>
</feature>
<name>HPND_SINFN</name>
<geneLocation type="plasmid">
    <name>sym pNGR234a</name>
</geneLocation>
<keyword id="KW-0614">Plasmid</keyword>
<keyword id="KW-1185">Reference proteome</keyword>
<keyword id="KW-0808">Transferase</keyword>
<reference key="1">
    <citation type="journal article" date="1997" name="Nature">
        <title>Molecular basis of symbiosis between Rhizobium and legumes.</title>
        <authorList>
            <person name="Freiberg C.A."/>
            <person name="Fellay R."/>
            <person name="Bairoch A."/>
            <person name="Broughton W.J."/>
            <person name="Rosenthal A."/>
            <person name="Perret X."/>
        </authorList>
    </citation>
    <scope>NUCLEOTIDE SEQUENCE [LARGE SCALE GENOMIC DNA]</scope>
    <source>
        <strain>NBRC 101917 / NGR234</strain>
    </source>
</reference>
<reference key="2">
    <citation type="journal article" date="2009" name="Appl. Environ. Microbiol.">
        <title>Rhizobium sp. strain NGR234 possesses a remarkable number of secretion systems.</title>
        <authorList>
            <person name="Schmeisser C."/>
            <person name="Liesegang H."/>
            <person name="Krysciak D."/>
            <person name="Bakkou N."/>
            <person name="Le Quere A."/>
            <person name="Wollherr A."/>
            <person name="Heinemeyer I."/>
            <person name="Morgenstern B."/>
            <person name="Pommerening-Roeser A."/>
            <person name="Flores M."/>
            <person name="Palacios R."/>
            <person name="Brenner S."/>
            <person name="Gottschalk G."/>
            <person name="Schmitz R.A."/>
            <person name="Broughton W.J."/>
            <person name="Perret X."/>
            <person name="Strittmatter A.W."/>
            <person name="Streit W.R."/>
        </authorList>
    </citation>
    <scope>NUCLEOTIDE SEQUENCE [LARGE SCALE GENOMIC DNA]</scope>
    <source>
        <strain>NBRC 101917 / NGR234</strain>
    </source>
</reference>
<dbReference type="EC" id="2.5.1.103" evidence="1"/>
<dbReference type="EMBL" id="U00090">
    <property type="protein sequence ID" value="AAB91601.1"/>
    <property type="molecule type" value="Genomic_DNA"/>
</dbReference>
<dbReference type="RefSeq" id="NP_443763.1">
    <property type="nucleotide sequence ID" value="NC_000914.2"/>
</dbReference>
<dbReference type="RefSeq" id="WP_010875086.1">
    <property type="nucleotide sequence ID" value="NC_000914.2"/>
</dbReference>
<dbReference type="SMR" id="P55350"/>
<dbReference type="KEGG" id="rhi:NGR_a00440"/>
<dbReference type="PATRIC" id="fig|394.7.peg.41"/>
<dbReference type="eggNOG" id="COG1562">
    <property type="taxonomic scope" value="Bacteria"/>
</dbReference>
<dbReference type="HOGENOM" id="CLU_037269_1_1_5"/>
<dbReference type="OrthoDB" id="9807580at2"/>
<dbReference type="UniPathway" id="UPA00337"/>
<dbReference type="Proteomes" id="UP000001054">
    <property type="component" value="Plasmid pNGR234a"/>
</dbReference>
<dbReference type="GO" id="GO:0004311">
    <property type="term" value="F:geranylgeranyl diphosphate synthase activity"/>
    <property type="evidence" value="ECO:0007669"/>
    <property type="project" value="InterPro"/>
</dbReference>
<dbReference type="GO" id="GO:0051996">
    <property type="term" value="F:squalene synthase [NAD(P)H] activity"/>
    <property type="evidence" value="ECO:0007669"/>
    <property type="project" value="InterPro"/>
</dbReference>
<dbReference type="GO" id="GO:0016117">
    <property type="term" value="P:carotenoid biosynthetic process"/>
    <property type="evidence" value="ECO:0007669"/>
    <property type="project" value="InterPro"/>
</dbReference>
<dbReference type="CDD" id="cd00683">
    <property type="entry name" value="Trans_IPPS_HH"/>
    <property type="match status" value="1"/>
</dbReference>
<dbReference type="Gene3D" id="1.10.600.10">
    <property type="entry name" value="Farnesyl Diphosphate Synthase"/>
    <property type="match status" value="1"/>
</dbReference>
<dbReference type="InterPro" id="IPR008949">
    <property type="entry name" value="Isoprenoid_synthase_dom_sf"/>
</dbReference>
<dbReference type="InterPro" id="IPR017828">
    <property type="entry name" value="SQ_synth_HpnD-like"/>
</dbReference>
<dbReference type="InterPro" id="IPR002060">
    <property type="entry name" value="Squ/phyt_synthse"/>
</dbReference>
<dbReference type="InterPro" id="IPR019845">
    <property type="entry name" value="Squalene/phytoene_synthase_CS"/>
</dbReference>
<dbReference type="InterPro" id="IPR044843">
    <property type="entry name" value="Trans_IPPS_bact-type"/>
</dbReference>
<dbReference type="InterPro" id="IPR033904">
    <property type="entry name" value="Trans_IPPS_HH"/>
</dbReference>
<dbReference type="NCBIfam" id="TIGR03465">
    <property type="entry name" value="HpnD"/>
    <property type="match status" value="1"/>
</dbReference>
<dbReference type="PANTHER" id="PTHR31480">
    <property type="entry name" value="BIFUNCTIONAL LYCOPENE CYCLASE/PHYTOENE SYNTHASE"/>
    <property type="match status" value="1"/>
</dbReference>
<dbReference type="Pfam" id="PF00494">
    <property type="entry name" value="SQS_PSY"/>
    <property type="match status" value="1"/>
</dbReference>
<dbReference type="SFLD" id="SFLDG01212">
    <property type="entry name" value="Phytoene_synthase_like"/>
    <property type="match status" value="1"/>
</dbReference>
<dbReference type="SFLD" id="SFLDG01018">
    <property type="entry name" value="Squalene/Phytoene_Synthase_Lik"/>
    <property type="match status" value="1"/>
</dbReference>
<dbReference type="SUPFAM" id="SSF48576">
    <property type="entry name" value="Terpenoid synthases"/>
    <property type="match status" value="1"/>
</dbReference>
<dbReference type="PROSITE" id="PS01044">
    <property type="entry name" value="SQUALEN_PHYTOEN_SYN_1"/>
    <property type="match status" value="1"/>
</dbReference>
<dbReference type="PROSITE" id="PS01045">
    <property type="entry name" value="SQUALEN_PHYTOEN_SYN_2"/>
    <property type="match status" value="1"/>
</dbReference>
<evidence type="ECO:0000250" key="1">
    <source>
        <dbReference type="UniProtKB" id="Q6N3F2"/>
    </source>
</evidence>
<evidence type="ECO:0000305" key="2"/>
<gene>
    <name type="ordered locus">NGR_a00440</name>
    <name type="ORF">y4aC</name>
</gene>
<proteinExistence type="inferred from homology"/>
<protein>
    <recommendedName>
        <fullName evidence="1">Presqualene diphosphate synthase</fullName>
        <shortName evidence="1">PSPP synthase</shortName>
        <shortName evidence="1">PSPPase</shortName>
        <ecNumber evidence="1">2.5.1.103</ecNumber>
    </recommendedName>
</protein>
<organism>
    <name type="scientific">Sinorhizobium fredii (strain NBRC 101917 / NGR234)</name>
    <dbReference type="NCBI Taxonomy" id="394"/>
    <lineage>
        <taxon>Bacteria</taxon>
        <taxon>Pseudomonadati</taxon>
        <taxon>Pseudomonadota</taxon>
        <taxon>Alphaproteobacteria</taxon>
        <taxon>Hyphomicrobiales</taxon>
        <taxon>Rhizobiaceae</taxon>
        <taxon>Sinorhizobium/Ensifer group</taxon>
        <taxon>Sinorhizobium</taxon>
    </lineage>
</organism>
<comment type="function">
    <text evidence="1">Involved in the biosynthesis of the hopanoid precursor squalene (SQ) from farnesyl diphosphate (FPP). Catalyzes the first step, the formation of presqualene diphosphate (PSPP) from two molecules of FPP.</text>
</comment>
<comment type="catalytic activity">
    <reaction evidence="1">
        <text>2 (2E,6E)-farnesyl diphosphate = presqualene diphosphate + diphosphate</text>
        <dbReference type="Rhea" id="RHEA:22672"/>
        <dbReference type="ChEBI" id="CHEBI:33019"/>
        <dbReference type="ChEBI" id="CHEBI:57310"/>
        <dbReference type="ChEBI" id="CHEBI:175763"/>
        <dbReference type="EC" id="2.5.1.103"/>
    </reaction>
</comment>
<comment type="pathway">
    <text evidence="1">Secondary metabolite biosynthesis; hopanoid biosynthesis.</text>
</comment>
<comment type="similarity">
    <text evidence="2">Belongs to the phytoene/squalene synthase family. HpnD subfamily.</text>
</comment>
<sequence length="279" mass="31354">MRAEAAAHANHRSTALGSSFYLGMRTLPPVQREAIFQIYSFCRQVDDIADSDEPREHRLAALQQWRDHIDALYQCVPPPRLKDYLASVTTFGLKREDFLAVVDGMEMDVLQDIRAPKMATLDLYCDRVASAVGRMSVRVFGLSEEDGIALAHHLGRALQLTNILRDIDEDAGLGRLYIPRESLDHAGITSSDPHKVIADKALPKACAPLAQRAMMHFAESDEIMNCNPRRIVRAPTIMSKCYRAILDLLLIRGFAAPREPVRVTNLTKRAILFRYALML</sequence>